<proteinExistence type="inferred from homology"/>
<keyword id="KW-0067">ATP-binding</keyword>
<keyword id="KW-0133">Cell shape</keyword>
<keyword id="KW-0961">Cell wall biogenesis/degradation</keyword>
<keyword id="KW-0963">Cytoplasm</keyword>
<keyword id="KW-0436">Ligase</keyword>
<keyword id="KW-0460">Magnesium</keyword>
<keyword id="KW-0464">Manganese</keyword>
<keyword id="KW-0479">Metal-binding</keyword>
<keyword id="KW-0547">Nucleotide-binding</keyword>
<keyword id="KW-0573">Peptidoglycan synthesis</keyword>
<gene>
    <name evidence="2" type="primary">ddl</name>
    <name type="ordered locus">Bcer98_0232</name>
</gene>
<comment type="function">
    <text evidence="2">Cell wall formation.</text>
</comment>
<comment type="catalytic activity">
    <reaction evidence="2">
        <text>2 D-alanine + ATP = D-alanyl-D-alanine + ADP + phosphate + H(+)</text>
        <dbReference type="Rhea" id="RHEA:11224"/>
        <dbReference type="ChEBI" id="CHEBI:15378"/>
        <dbReference type="ChEBI" id="CHEBI:30616"/>
        <dbReference type="ChEBI" id="CHEBI:43474"/>
        <dbReference type="ChEBI" id="CHEBI:57416"/>
        <dbReference type="ChEBI" id="CHEBI:57822"/>
        <dbReference type="ChEBI" id="CHEBI:456216"/>
        <dbReference type="EC" id="6.3.2.4"/>
    </reaction>
</comment>
<comment type="cofactor">
    <cofactor evidence="1">
        <name>Mg(2+)</name>
        <dbReference type="ChEBI" id="CHEBI:18420"/>
    </cofactor>
    <cofactor evidence="1">
        <name>Mn(2+)</name>
        <dbReference type="ChEBI" id="CHEBI:29035"/>
    </cofactor>
    <text evidence="1">Binds 2 magnesium or manganese ions per subunit.</text>
</comment>
<comment type="pathway">
    <text evidence="2">Cell wall biogenesis; peptidoglycan biosynthesis.</text>
</comment>
<comment type="subcellular location">
    <subcellularLocation>
        <location evidence="2">Cytoplasm</location>
    </subcellularLocation>
</comment>
<comment type="similarity">
    <text evidence="2">Belongs to the D-alanine--D-alanine ligase family.</text>
</comment>
<accession>A7GKE0</accession>
<protein>
    <recommendedName>
        <fullName evidence="2">D-alanine--D-alanine ligase</fullName>
        <ecNumber evidence="2">6.3.2.4</ecNumber>
    </recommendedName>
    <alternativeName>
        <fullName evidence="2">D-Ala-D-Ala ligase</fullName>
    </alternativeName>
    <alternativeName>
        <fullName evidence="2">D-alanylalanine synthetase</fullName>
    </alternativeName>
</protein>
<name>DDL_BACCN</name>
<sequence length="362" mass="40270">MTKIKLGLLYGGKSAEHQVSLQTALAAIKALNQEKFEIHPIYITEQGQWMRGERIEGEVTSVQALQMSGEANAISPVSLSTEIIPAPASKQEEAIDVIFPLLHGPNGEDGTVQGLLELMNIPYVGNGVLASAAGMDKVVMKNIFAEAGLNQAKYTSFVRSVWEKNREEAYEKVEEALGYPCFVKPANLGSSVGINKCKDREELEKAFEEAFQFDRKIIVEENIIGREVEVGVLGNDDPKCSVVGEIVPKKEFYDYKSKYIDGDTALIIPAEITEEETATIQRDAIRAFQALDGAGLTRADFFLTKDGEVYINEVNTMPGFTPFSMFPLLWQHTGLSYPELIEELIRLAIERHKEKQKIKYTI</sequence>
<organism>
    <name type="scientific">Bacillus cytotoxicus (strain DSM 22905 / CIP 110041 / 391-98 / NVH 391-98)</name>
    <dbReference type="NCBI Taxonomy" id="315749"/>
    <lineage>
        <taxon>Bacteria</taxon>
        <taxon>Bacillati</taxon>
        <taxon>Bacillota</taxon>
        <taxon>Bacilli</taxon>
        <taxon>Bacillales</taxon>
        <taxon>Bacillaceae</taxon>
        <taxon>Bacillus</taxon>
        <taxon>Bacillus cereus group</taxon>
    </lineage>
</organism>
<evidence type="ECO:0000250" key="1"/>
<evidence type="ECO:0000255" key="2">
    <source>
        <dbReference type="HAMAP-Rule" id="MF_00047"/>
    </source>
</evidence>
<dbReference type="EC" id="6.3.2.4" evidence="2"/>
<dbReference type="EMBL" id="CP000764">
    <property type="protein sequence ID" value="ABS20598.1"/>
    <property type="molecule type" value="Genomic_DNA"/>
</dbReference>
<dbReference type="RefSeq" id="WP_011983359.1">
    <property type="nucleotide sequence ID" value="NC_009674.1"/>
</dbReference>
<dbReference type="SMR" id="A7GKE0"/>
<dbReference type="STRING" id="315749.Bcer98_0232"/>
<dbReference type="GeneID" id="33895559"/>
<dbReference type="KEGG" id="bcy:Bcer98_0232"/>
<dbReference type="eggNOG" id="COG1181">
    <property type="taxonomic scope" value="Bacteria"/>
</dbReference>
<dbReference type="HOGENOM" id="CLU_039268_0_0_9"/>
<dbReference type="OrthoDB" id="9813261at2"/>
<dbReference type="UniPathway" id="UPA00219"/>
<dbReference type="Proteomes" id="UP000002300">
    <property type="component" value="Chromosome"/>
</dbReference>
<dbReference type="GO" id="GO:0005829">
    <property type="term" value="C:cytosol"/>
    <property type="evidence" value="ECO:0007669"/>
    <property type="project" value="TreeGrafter"/>
</dbReference>
<dbReference type="GO" id="GO:0005524">
    <property type="term" value="F:ATP binding"/>
    <property type="evidence" value="ECO:0007669"/>
    <property type="project" value="UniProtKB-KW"/>
</dbReference>
<dbReference type="GO" id="GO:0008716">
    <property type="term" value="F:D-alanine-D-alanine ligase activity"/>
    <property type="evidence" value="ECO:0007669"/>
    <property type="project" value="UniProtKB-UniRule"/>
</dbReference>
<dbReference type="GO" id="GO:0046872">
    <property type="term" value="F:metal ion binding"/>
    <property type="evidence" value="ECO:0007669"/>
    <property type="project" value="UniProtKB-KW"/>
</dbReference>
<dbReference type="GO" id="GO:0071555">
    <property type="term" value="P:cell wall organization"/>
    <property type="evidence" value="ECO:0007669"/>
    <property type="project" value="UniProtKB-KW"/>
</dbReference>
<dbReference type="GO" id="GO:0009252">
    <property type="term" value="P:peptidoglycan biosynthetic process"/>
    <property type="evidence" value="ECO:0007669"/>
    <property type="project" value="UniProtKB-UniRule"/>
</dbReference>
<dbReference type="GO" id="GO:0008360">
    <property type="term" value="P:regulation of cell shape"/>
    <property type="evidence" value="ECO:0007669"/>
    <property type="project" value="UniProtKB-KW"/>
</dbReference>
<dbReference type="FunFam" id="3.30.1490.20:FF:000007">
    <property type="entry name" value="D-alanine--D-alanine ligase"/>
    <property type="match status" value="1"/>
</dbReference>
<dbReference type="FunFam" id="3.30.470.20:FF:000008">
    <property type="entry name" value="D-alanine--D-alanine ligase"/>
    <property type="match status" value="1"/>
</dbReference>
<dbReference type="FunFam" id="3.40.50.20:FF:000020">
    <property type="entry name" value="D-alanine--D-alanine ligase"/>
    <property type="match status" value="1"/>
</dbReference>
<dbReference type="Gene3D" id="3.40.50.20">
    <property type="match status" value="1"/>
</dbReference>
<dbReference type="Gene3D" id="3.30.1490.20">
    <property type="entry name" value="ATP-grasp fold, A domain"/>
    <property type="match status" value="1"/>
</dbReference>
<dbReference type="Gene3D" id="3.30.470.20">
    <property type="entry name" value="ATP-grasp fold, B domain"/>
    <property type="match status" value="1"/>
</dbReference>
<dbReference type="HAMAP" id="MF_00047">
    <property type="entry name" value="Dala_Dala_lig"/>
    <property type="match status" value="1"/>
</dbReference>
<dbReference type="InterPro" id="IPR011761">
    <property type="entry name" value="ATP-grasp"/>
</dbReference>
<dbReference type="InterPro" id="IPR013815">
    <property type="entry name" value="ATP_grasp_subdomain_1"/>
</dbReference>
<dbReference type="InterPro" id="IPR000291">
    <property type="entry name" value="D-Ala_lig_Van_CS"/>
</dbReference>
<dbReference type="InterPro" id="IPR005905">
    <property type="entry name" value="D_ala_D_ala"/>
</dbReference>
<dbReference type="InterPro" id="IPR011095">
    <property type="entry name" value="Dala_Dala_lig_C"/>
</dbReference>
<dbReference type="InterPro" id="IPR011127">
    <property type="entry name" value="Dala_Dala_lig_N"/>
</dbReference>
<dbReference type="InterPro" id="IPR016185">
    <property type="entry name" value="PreATP-grasp_dom_sf"/>
</dbReference>
<dbReference type="NCBIfam" id="TIGR01205">
    <property type="entry name" value="D_ala_D_alaTIGR"/>
    <property type="match status" value="1"/>
</dbReference>
<dbReference type="NCBIfam" id="NF002378">
    <property type="entry name" value="PRK01372.1"/>
    <property type="match status" value="1"/>
</dbReference>
<dbReference type="NCBIfam" id="NF002526">
    <property type="entry name" value="PRK01966.1-2"/>
    <property type="match status" value="1"/>
</dbReference>
<dbReference type="NCBIfam" id="NF002528">
    <property type="entry name" value="PRK01966.1-4"/>
    <property type="match status" value="1"/>
</dbReference>
<dbReference type="PANTHER" id="PTHR23132">
    <property type="entry name" value="D-ALANINE--D-ALANINE LIGASE"/>
    <property type="match status" value="1"/>
</dbReference>
<dbReference type="PANTHER" id="PTHR23132:SF25">
    <property type="entry name" value="D-ALANINE--D-ALANINE LIGASE A"/>
    <property type="match status" value="1"/>
</dbReference>
<dbReference type="Pfam" id="PF07478">
    <property type="entry name" value="Dala_Dala_lig_C"/>
    <property type="match status" value="1"/>
</dbReference>
<dbReference type="Pfam" id="PF01820">
    <property type="entry name" value="Dala_Dala_lig_N"/>
    <property type="match status" value="1"/>
</dbReference>
<dbReference type="PIRSF" id="PIRSF039102">
    <property type="entry name" value="Ddl/VanB"/>
    <property type="match status" value="1"/>
</dbReference>
<dbReference type="SUPFAM" id="SSF56059">
    <property type="entry name" value="Glutathione synthetase ATP-binding domain-like"/>
    <property type="match status" value="1"/>
</dbReference>
<dbReference type="SUPFAM" id="SSF52440">
    <property type="entry name" value="PreATP-grasp domain"/>
    <property type="match status" value="1"/>
</dbReference>
<dbReference type="PROSITE" id="PS50975">
    <property type="entry name" value="ATP_GRASP"/>
    <property type="match status" value="1"/>
</dbReference>
<dbReference type="PROSITE" id="PS00843">
    <property type="entry name" value="DALA_DALA_LIGASE_1"/>
    <property type="match status" value="1"/>
</dbReference>
<dbReference type="PROSITE" id="PS00844">
    <property type="entry name" value="DALA_DALA_LIGASE_2"/>
    <property type="match status" value="1"/>
</dbReference>
<feature type="chain" id="PRO_1000074762" description="D-alanine--D-alanine ligase">
    <location>
        <begin position="1"/>
        <end position="362"/>
    </location>
</feature>
<feature type="domain" description="ATP-grasp" evidence="2">
    <location>
        <begin position="141"/>
        <end position="346"/>
    </location>
</feature>
<feature type="binding site" evidence="2">
    <location>
        <begin position="174"/>
        <end position="229"/>
    </location>
    <ligand>
        <name>ATP</name>
        <dbReference type="ChEBI" id="CHEBI:30616"/>
    </ligand>
</feature>
<feature type="binding site" evidence="2">
    <location>
        <position position="300"/>
    </location>
    <ligand>
        <name>Mg(2+)</name>
        <dbReference type="ChEBI" id="CHEBI:18420"/>
        <label>1</label>
    </ligand>
</feature>
<feature type="binding site" evidence="2">
    <location>
        <position position="313"/>
    </location>
    <ligand>
        <name>Mg(2+)</name>
        <dbReference type="ChEBI" id="CHEBI:18420"/>
        <label>1</label>
    </ligand>
</feature>
<feature type="binding site" evidence="2">
    <location>
        <position position="313"/>
    </location>
    <ligand>
        <name>Mg(2+)</name>
        <dbReference type="ChEBI" id="CHEBI:18420"/>
        <label>2</label>
    </ligand>
</feature>
<feature type="binding site" evidence="2">
    <location>
        <position position="315"/>
    </location>
    <ligand>
        <name>Mg(2+)</name>
        <dbReference type="ChEBI" id="CHEBI:18420"/>
        <label>2</label>
    </ligand>
</feature>
<reference key="1">
    <citation type="journal article" date="2008" name="Chem. Biol. Interact.">
        <title>Extending the Bacillus cereus group genomics to putative food-borne pathogens of different toxicity.</title>
        <authorList>
            <person name="Lapidus A."/>
            <person name="Goltsman E."/>
            <person name="Auger S."/>
            <person name="Galleron N."/>
            <person name="Segurens B."/>
            <person name="Dossat C."/>
            <person name="Land M.L."/>
            <person name="Broussolle V."/>
            <person name="Brillard J."/>
            <person name="Guinebretiere M.-H."/>
            <person name="Sanchis V."/>
            <person name="Nguen-the C."/>
            <person name="Lereclus D."/>
            <person name="Richardson P."/>
            <person name="Wincker P."/>
            <person name="Weissenbach J."/>
            <person name="Ehrlich S.D."/>
            <person name="Sorokin A."/>
        </authorList>
    </citation>
    <scope>NUCLEOTIDE SEQUENCE [LARGE SCALE GENOMIC DNA]</scope>
    <source>
        <strain>DSM 22905 / CIP 110041 / 391-98 / NVH 391-98</strain>
    </source>
</reference>